<dbReference type="EMBL" id="U07602">
    <property type="protein sequence ID" value="AAC53247.1"/>
    <property type="molecule type" value="Genomic_DNA"/>
</dbReference>
<dbReference type="EMBL" id="U07598">
    <property type="protein sequence ID" value="AAC53247.1"/>
    <property type="status" value="JOINED"/>
    <property type="molecule type" value="Genomic_DNA"/>
</dbReference>
<dbReference type="EMBL" id="U07599">
    <property type="protein sequence ID" value="AAC53247.1"/>
    <property type="status" value="JOINED"/>
    <property type="molecule type" value="Genomic_DNA"/>
</dbReference>
<dbReference type="EMBL" id="U07600">
    <property type="protein sequence ID" value="AAC53247.1"/>
    <property type="status" value="JOINED"/>
    <property type="molecule type" value="Genomic_DNA"/>
</dbReference>
<dbReference type="EMBL" id="Z48781">
    <property type="protein sequence ID" value="CAA88695.1"/>
    <property type="molecule type" value="mRNA"/>
</dbReference>
<dbReference type="EMBL" id="U12983">
    <property type="protein sequence ID" value="AAA53231.1"/>
    <property type="molecule type" value="mRNA"/>
</dbReference>
<dbReference type="EMBL" id="BC006797">
    <property type="protein sequence ID" value="AAH06797.1"/>
    <property type="molecule type" value="mRNA"/>
</dbReference>
<dbReference type="EMBL" id="BC021656">
    <property type="protein sequence ID" value="AAH21656.1"/>
    <property type="molecule type" value="mRNA"/>
</dbReference>
<dbReference type="CCDS" id="CCDS30298.1"/>
<dbReference type="PIR" id="I48780">
    <property type="entry name" value="I48780"/>
</dbReference>
<dbReference type="RefSeq" id="NP_034240.1">
    <property type="nucleotide sequence ID" value="NM_010110.5"/>
</dbReference>
<dbReference type="PDB" id="6P7S">
    <property type="method" value="X-ray"/>
    <property type="resolution" value="3.49 A"/>
    <property type="chains" value="B/D=29-170"/>
</dbReference>
<dbReference type="PDBsum" id="6P7S"/>
<dbReference type="SMR" id="P52795"/>
<dbReference type="BioGRID" id="199394">
    <property type="interactions" value="9"/>
</dbReference>
<dbReference type="CORUM" id="P52795"/>
<dbReference type="DIP" id="DIP-29206N"/>
<dbReference type="FunCoup" id="P52795">
    <property type="interactions" value="394"/>
</dbReference>
<dbReference type="IntAct" id="P52795">
    <property type="interactions" value="8"/>
</dbReference>
<dbReference type="MINT" id="P52795"/>
<dbReference type="STRING" id="10090.ENSMUSP00000050716"/>
<dbReference type="GlyCosmos" id="P52795">
    <property type="glycosylation" value="1 site, No reported glycans"/>
</dbReference>
<dbReference type="GlyGen" id="P52795">
    <property type="glycosylation" value="1 site, 1 N-linked glycan (1 site)"/>
</dbReference>
<dbReference type="iPTMnet" id="P52795"/>
<dbReference type="PhosphoSitePlus" id="P52795"/>
<dbReference type="SwissPalm" id="P52795"/>
<dbReference type="PaxDb" id="10090-ENSMUSP00000050716"/>
<dbReference type="PeptideAtlas" id="P52795"/>
<dbReference type="ProteomicsDB" id="277769"/>
<dbReference type="Pumba" id="P52795"/>
<dbReference type="Antibodypedia" id="43761">
    <property type="antibodies" value="583 antibodies from 36 providers"/>
</dbReference>
<dbReference type="DNASU" id="13641"/>
<dbReference type="Ensembl" id="ENSMUST00000052839.7">
    <property type="protein sequence ID" value="ENSMUSP00000050716.7"/>
    <property type="gene ID" value="ENSMUSG00000031217.9"/>
</dbReference>
<dbReference type="GeneID" id="13641"/>
<dbReference type="KEGG" id="mmu:13641"/>
<dbReference type="UCSC" id="uc009tvi.1">
    <property type="organism name" value="mouse"/>
</dbReference>
<dbReference type="AGR" id="MGI:102708"/>
<dbReference type="CTD" id="1947"/>
<dbReference type="MGI" id="MGI:102708">
    <property type="gene designation" value="Efnb1"/>
</dbReference>
<dbReference type="VEuPathDB" id="HostDB:ENSMUSG00000031217"/>
<dbReference type="eggNOG" id="KOG3858">
    <property type="taxonomic scope" value="Eukaryota"/>
</dbReference>
<dbReference type="GeneTree" id="ENSGT00940000160128"/>
<dbReference type="HOGENOM" id="CLU_072080_0_0_1"/>
<dbReference type="InParanoid" id="P52795"/>
<dbReference type="OMA" id="ILMCRSA"/>
<dbReference type="OrthoDB" id="6250301at2759"/>
<dbReference type="PhylomeDB" id="P52795"/>
<dbReference type="Reactome" id="R-MMU-2682334">
    <property type="pathway name" value="EPH-Ephrin signaling"/>
</dbReference>
<dbReference type="Reactome" id="R-MMU-3928662">
    <property type="pathway name" value="EPHB-mediated forward signaling"/>
</dbReference>
<dbReference type="Reactome" id="R-MMU-3928664">
    <property type="pathway name" value="Ephrin signaling"/>
</dbReference>
<dbReference type="Reactome" id="R-MMU-3928665">
    <property type="pathway name" value="EPH-ephrin mediated repulsion of cells"/>
</dbReference>
<dbReference type="BioGRID-ORCS" id="13641">
    <property type="hits" value="0 hits in 80 CRISPR screens"/>
</dbReference>
<dbReference type="ChiTaRS" id="Efnb1">
    <property type="organism name" value="mouse"/>
</dbReference>
<dbReference type="PRO" id="PR:P52795"/>
<dbReference type="Proteomes" id="UP000000589">
    <property type="component" value="Chromosome X"/>
</dbReference>
<dbReference type="RNAct" id="P52795">
    <property type="molecule type" value="protein"/>
</dbReference>
<dbReference type="Bgee" id="ENSMUSG00000031217">
    <property type="expression patterns" value="Expressed in ventricular zone and 321 other cell types or tissues"/>
</dbReference>
<dbReference type="ExpressionAtlas" id="P52795">
    <property type="expression patterns" value="baseline and differential"/>
</dbReference>
<dbReference type="GO" id="GO:0009986">
    <property type="term" value="C:cell surface"/>
    <property type="evidence" value="ECO:0007669"/>
    <property type="project" value="Ensembl"/>
</dbReference>
<dbReference type="GO" id="GO:0005737">
    <property type="term" value="C:cytoplasm"/>
    <property type="evidence" value="ECO:0000314"/>
    <property type="project" value="MGI"/>
</dbReference>
<dbReference type="GO" id="GO:0045121">
    <property type="term" value="C:membrane raft"/>
    <property type="evidence" value="ECO:0000314"/>
    <property type="project" value="MGI"/>
</dbReference>
<dbReference type="GO" id="GO:0005634">
    <property type="term" value="C:nucleus"/>
    <property type="evidence" value="ECO:0000314"/>
    <property type="project" value="MGI"/>
</dbReference>
<dbReference type="GO" id="GO:0005886">
    <property type="term" value="C:plasma membrane"/>
    <property type="evidence" value="ECO:0000304"/>
    <property type="project" value="Reactome"/>
</dbReference>
<dbReference type="GO" id="GO:0046875">
    <property type="term" value="F:ephrin receptor binding"/>
    <property type="evidence" value="ECO:0000353"/>
    <property type="project" value="MGI"/>
</dbReference>
<dbReference type="GO" id="GO:0007411">
    <property type="term" value="P:axon guidance"/>
    <property type="evidence" value="ECO:0000315"/>
    <property type="project" value="MGI"/>
</dbReference>
<dbReference type="GO" id="GO:0009880">
    <property type="term" value="P:embryonic pattern specification"/>
    <property type="evidence" value="ECO:0000315"/>
    <property type="project" value="MGI"/>
</dbReference>
<dbReference type="GO" id="GO:0048013">
    <property type="term" value="P:ephrin receptor signaling pathway"/>
    <property type="evidence" value="ECO:0007669"/>
    <property type="project" value="InterPro"/>
</dbReference>
<dbReference type="GO" id="GO:0001755">
    <property type="term" value="P:neural crest cell migration"/>
    <property type="evidence" value="ECO:0000315"/>
    <property type="project" value="MGI"/>
</dbReference>
<dbReference type="GO" id="GO:0042102">
    <property type="term" value="P:positive regulation of T cell proliferation"/>
    <property type="evidence" value="ECO:0000314"/>
    <property type="project" value="MGI"/>
</dbReference>
<dbReference type="GO" id="GO:2000785">
    <property type="term" value="P:regulation of autophagosome assembly"/>
    <property type="evidence" value="ECO:0007669"/>
    <property type="project" value="Ensembl"/>
</dbReference>
<dbReference type="GO" id="GO:0031295">
    <property type="term" value="P:T cell costimulation"/>
    <property type="evidence" value="ECO:0000314"/>
    <property type="project" value="MGI"/>
</dbReference>
<dbReference type="GO" id="GO:0042098">
    <property type="term" value="P:T cell proliferation"/>
    <property type="evidence" value="ECO:0000314"/>
    <property type="project" value="MGI"/>
</dbReference>
<dbReference type="CDD" id="cd10426">
    <property type="entry name" value="Ephrin-B_Ectodomain"/>
    <property type="match status" value="1"/>
</dbReference>
<dbReference type="FunFam" id="2.60.40.420:FF:000027">
    <property type="entry name" value="ephrin-B1"/>
    <property type="match status" value="1"/>
</dbReference>
<dbReference type="Gene3D" id="2.60.40.420">
    <property type="entry name" value="Cupredoxins - blue copper proteins"/>
    <property type="match status" value="1"/>
</dbReference>
<dbReference type="InterPro" id="IPR008972">
    <property type="entry name" value="Cupredoxin"/>
</dbReference>
<dbReference type="InterPro" id="IPR031328">
    <property type="entry name" value="Ephrin"/>
</dbReference>
<dbReference type="InterPro" id="IPR034255">
    <property type="entry name" value="Ephrin-B_Ecto"/>
</dbReference>
<dbReference type="InterPro" id="IPR019765">
    <property type="entry name" value="Ephrin_CS"/>
</dbReference>
<dbReference type="InterPro" id="IPR001799">
    <property type="entry name" value="Ephrin_RBD"/>
</dbReference>
<dbReference type="PANTHER" id="PTHR11304">
    <property type="entry name" value="EPHRIN"/>
    <property type="match status" value="1"/>
</dbReference>
<dbReference type="PANTHER" id="PTHR11304:SF17">
    <property type="entry name" value="EPHRIN-B1"/>
    <property type="match status" value="1"/>
</dbReference>
<dbReference type="Pfam" id="PF00812">
    <property type="entry name" value="Ephrin"/>
    <property type="match status" value="1"/>
</dbReference>
<dbReference type="PRINTS" id="PR01347">
    <property type="entry name" value="EPHRIN"/>
</dbReference>
<dbReference type="SUPFAM" id="SSF49503">
    <property type="entry name" value="Cupredoxins"/>
    <property type="match status" value="1"/>
</dbReference>
<dbReference type="PROSITE" id="PS01299">
    <property type="entry name" value="EPHRIN_RBD_1"/>
    <property type="match status" value="1"/>
</dbReference>
<dbReference type="PROSITE" id="PS51551">
    <property type="entry name" value="EPHRIN_RBD_2"/>
    <property type="match status" value="1"/>
</dbReference>
<protein>
    <recommendedName>
        <fullName>Ephrin-B1</fullName>
    </recommendedName>
    <alternativeName>
        <fullName>CEK5 receptor ligand</fullName>
        <shortName>CEK5-L</shortName>
    </alternativeName>
    <alternativeName>
        <fullName>EFL-3</fullName>
    </alternativeName>
    <alternativeName>
        <fullName>ELK ligand</fullName>
        <shortName>ELK-L</shortName>
    </alternativeName>
    <alternativeName>
        <fullName>EPH-related receptor tyrosine kinase ligand 2</fullName>
        <shortName>LERK-2</shortName>
    </alternativeName>
    <alternativeName>
        <fullName>Stimulated by retinoic acid gene 1 protein</fullName>
    </alternativeName>
    <component>
        <recommendedName>
            <fullName evidence="1">Ephrin-B1 C-terminal fragment</fullName>
            <shortName evidence="1">Ephrin-B1 CTF</shortName>
        </recommendedName>
    </component>
    <component>
        <recommendedName>
            <fullName evidence="1">Ephrin-B1 intracellular domain</fullName>
            <shortName evidence="1">Ephrin-B1 ICD</shortName>
        </recommendedName>
    </component>
</protein>
<comment type="function">
    <text evidence="1 6 10">Cell surface transmembrane ligand for Eph receptors, a family of receptor tyrosine kinases which are crucial for migration, repulsion and adhesion during neuronal, vascular and epithelial development (PubMed:10704386, PubMed:7929389). Binding to Eph receptors residing on adjacent cells leads to contact-dependent bidirectional signaling into neighboring cells (PubMed:10704386, PubMed:7929389). Shows high affinity for the receptor tyrosine kinase EPHB1/ELK (By similarity). Can also bind EPHB2 and EPHB3 (PubMed:7929389). Binds to, and induces the collapse of, commissural axons/growth cones in vitro (PubMed:10704386). May play a role in constraining the orientation of longitudinally projecting axons (PubMed:10704386).</text>
</comment>
<comment type="subunit">
    <text evidence="1 7 8">Interacts (via PDZ-binding motif) with GRIP1 and GRIP2 (via PDZ domain 6) (By similarity). Interacts with TLE1 (PubMed:21429299). The intracellular domain peptide interacts with ZHX2; the interaction enhances ZHX2 transcriptional repression activity (PubMed:19515908).</text>
</comment>
<comment type="interaction">
    <interactant intactId="EBI-8107507">
        <id>P52795</id>
    </interactant>
    <interactant intactId="EBI-990067">
        <id>P49769</id>
        <label>Psen1</label>
    </interactant>
    <organismsDiffer>false</organismsDiffer>
    <experiments>2</experiments>
</comment>
<comment type="interaction">
    <interactant intactId="EBI-8107507">
        <id>P52795</id>
    </interactant>
    <interactant intactId="EBI-538265">
        <id>O08992</id>
        <label>Sdcbp</label>
    </interactant>
    <organismsDiffer>false</organismsDiffer>
    <experiments>3</experiments>
</comment>
<comment type="subcellular location">
    <subcellularLocation>
        <location evidence="10 12">Cell membrane</location>
        <topology evidence="2">Single-pass type I membrane protein</topology>
    </subcellularLocation>
    <subcellularLocation>
        <location evidence="5">Membrane raft</location>
    </subcellularLocation>
    <text evidence="5">May recruit GRIP1 and GRIP2 to membrane raft domains.</text>
</comment>
<comment type="subcellular location">
    <molecule>Ephrin-B1 C-terminal fragment</molecule>
    <subcellularLocation>
        <location evidence="1">Cell membrane</location>
        <topology evidence="2">Single-pass type I membrane protein</topology>
    </subcellularLocation>
</comment>
<comment type="subcellular location">
    <molecule>Ephrin-B1 intracellular domain</molecule>
    <subcellularLocation>
        <location evidence="7">Nucleus</location>
    </subcellularLocation>
    <text evidence="7">Colocalizes with ZHX2 in the nucleus.</text>
</comment>
<comment type="tissue specificity">
    <text evidence="6 9">Expressed on lateral floor plate cells, specifically on commissural axon segments that have passed through the floor plate. Expressed in cells of the retinal ganglion cell layer during retinal axon guidance to the optic disk (PubMed:10704386). Expressed in myogenic progenitor cells (PubMed:27446912).</text>
</comment>
<comment type="developmental stage">
    <text evidence="6 9">Expressed in the floor plate throughout the period of commissural axon pathfinding (PubMed:10704386). In myogenic progenitor cells, highly expressed during early development (11.5 dpc) and progressively repressed as developments proceeds (PubMed:27446912).</text>
</comment>
<comment type="PTM">
    <text evidence="1">Inducible phosphorylation of tyrosine residues in the cytoplasmic domain.</text>
</comment>
<comment type="PTM">
    <text evidence="1">Proteolytically processed. The ectodomain is cleaved, probably by a metalloprotease, to produce a membrane-tethered C-terminal fragment. This fragment is then further processed by the gamma-secretase complex to yield a soluble intracellular domain peptide which can translocate to the nucleus. The intracellular domain peptide is highly labile suggesting that it is targeted for degradation by the proteasome.</text>
</comment>
<comment type="similarity">
    <text evidence="3">Belongs to the ephrin family.</text>
</comment>
<evidence type="ECO:0000250" key="1">
    <source>
        <dbReference type="UniProtKB" id="P98172"/>
    </source>
</evidence>
<evidence type="ECO:0000255" key="2"/>
<evidence type="ECO:0000255" key="3">
    <source>
        <dbReference type="PROSITE-ProRule" id="PRU00884"/>
    </source>
</evidence>
<evidence type="ECO:0000256" key="4">
    <source>
        <dbReference type="SAM" id="MobiDB-lite"/>
    </source>
</evidence>
<evidence type="ECO:0000269" key="5">
    <source>
    </source>
</evidence>
<evidence type="ECO:0000269" key="6">
    <source>
    </source>
</evidence>
<evidence type="ECO:0000269" key="7">
    <source>
    </source>
</evidence>
<evidence type="ECO:0000269" key="8">
    <source>
    </source>
</evidence>
<evidence type="ECO:0000269" key="9">
    <source>
    </source>
</evidence>
<evidence type="ECO:0000269" key="10">
    <source>
    </source>
</evidence>
<evidence type="ECO:0000305" key="11"/>
<evidence type="ECO:0000305" key="12">
    <source>
    </source>
</evidence>
<evidence type="ECO:0007829" key="13">
    <source>
        <dbReference type="PDB" id="6P7S"/>
    </source>
</evidence>
<name>EFNB1_MOUSE</name>
<proteinExistence type="evidence at protein level"/>
<organism>
    <name type="scientific">Mus musculus</name>
    <name type="common">Mouse</name>
    <dbReference type="NCBI Taxonomy" id="10090"/>
    <lineage>
        <taxon>Eukaryota</taxon>
        <taxon>Metazoa</taxon>
        <taxon>Chordata</taxon>
        <taxon>Craniata</taxon>
        <taxon>Vertebrata</taxon>
        <taxon>Euteleostomi</taxon>
        <taxon>Mammalia</taxon>
        <taxon>Eutheria</taxon>
        <taxon>Euarchontoglires</taxon>
        <taxon>Glires</taxon>
        <taxon>Rodentia</taxon>
        <taxon>Myomorpha</taxon>
        <taxon>Muroidea</taxon>
        <taxon>Muridae</taxon>
        <taxon>Murinae</taxon>
        <taxon>Mus</taxon>
        <taxon>Mus</taxon>
    </lineage>
</organism>
<keyword id="KW-0002">3D-structure</keyword>
<keyword id="KW-1003">Cell membrane</keyword>
<keyword id="KW-0217">Developmental protein</keyword>
<keyword id="KW-0221">Differentiation</keyword>
<keyword id="KW-1015">Disulfide bond</keyword>
<keyword id="KW-0325">Glycoprotein</keyword>
<keyword id="KW-0472">Membrane</keyword>
<keyword id="KW-0524">Neurogenesis</keyword>
<keyword id="KW-0539">Nucleus</keyword>
<keyword id="KW-0597">Phosphoprotein</keyword>
<keyword id="KW-1185">Reference proteome</keyword>
<keyword id="KW-0732">Signal</keyword>
<keyword id="KW-0812">Transmembrane</keyword>
<keyword id="KW-1133">Transmembrane helix</keyword>
<feature type="signal peptide" evidence="2">
    <location>
        <begin position="1"/>
        <end position="24"/>
    </location>
</feature>
<feature type="chain" id="PRO_0000008388" description="Ephrin-B1">
    <location>
        <begin position="25"/>
        <end position="345"/>
    </location>
</feature>
<feature type="chain" id="PRO_0000445793" description="Ephrin-B1 C-terminal fragment" evidence="1">
    <location>
        <begin position="217"/>
        <end position="345"/>
    </location>
</feature>
<feature type="chain" id="PRO_0000445794" description="Ephrin-B1 intracellular domain" evidence="1">
    <location>
        <begin position="259"/>
        <end position="345"/>
    </location>
</feature>
<feature type="topological domain" description="Extracellular" evidence="2">
    <location>
        <begin position="25"/>
        <end position="236"/>
    </location>
</feature>
<feature type="transmembrane region" description="Helical" evidence="2">
    <location>
        <begin position="237"/>
        <end position="257"/>
    </location>
</feature>
<feature type="topological domain" description="Cytoplasmic" evidence="2">
    <location>
        <begin position="258"/>
        <end position="345"/>
    </location>
</feature>
<feature type="domain" description="Ephrin RBD" evidence="3">
    <location>
        <begin position="30"/>
        <end position="164"/>
    </location>
</feature>
<feature type="region of interest" description="Disordered" evidence="4">
    <location>
        <begin position="169"/>
        <end position="227"/>
    </location>
</feature>
<feature type="region of interest" description="Interaction with ZHX2" evidence="7">
    <location>
        <begin position="262"/>
        <end position="293"/>
    </location>
</feature>
<feature type="short sequence motif" description="Nuclear localization signal" evidence="1">
    <location>
        <begin position="259"/>
        <end position="272"/>
    </location>
</feature>
<feature type="short sequence motif" description="PDZ-binding" evidence="2">
    <location>
        <begin position="343"/>
        <end position="345"/>
    </location>
</feature>
<feature type="compositionally biased region" description="Basic and acidic residues" evidence="4">
    <location>
        <begin position="204"/>
        <end position="217"/>
    </location>
</feature>
<feature type="modified residue" description="Phosphoserine" evidence="1">
    <location>
        <position position="280"/>
    </location>
</feature>
<feature type="modified residue" description="Phosphoserine" evidence="1">
    <location>
        <position position="286"/>
    </location>
</feature>
<feature type="glycosylation site" description="N-linked (GlcNAc...) asparagine" evidence="2">
    <location>
        <position position="139"/>
    </location>
</feature>
<feature type="disulfide bond" evidence="3">
    <location>
        <begin position="64"/>
        <end position="101"/>
    </location>
</feature>
<feature type="disulfide bond" evidence="3">
    <location>
        <begin position="89"/>
        <end position="153"/>
    </location>
</feature>
<feature type="sequence conflict" description="In Ref. 2; AAA53231." evidence="11" ref="2">
    <original>S</original>
    <variation>T</variation>
    <location>
        <position position="90"/>
    </location>
</feature>
<feature type="turn" evidence="13">
    <location>
        <begin position="46"/>
        <end position="48"/>
    </location>
</feature>
<feature type="strand" evidence="13">
    <location>
        <begin position="49"/>
        <end position="52"/>
    </location>
</feature>
<feature type="strand" evidence="13">
    <location>
        <begin position="59"/>
        <end position="64"/>
    </location>
</feature>
<feature type="strand" evidence="13">
    <location>
        <begin position="76"/>
        <end position="81"/>
    </location>
</feature>
<feature type="helix" evidence="13">
    <location>
        <begin position="83"/>
        <end position="88"/>
    </location>
</feature>
<feature type="strand" evidence="13">
    <location>
        <begin position="96"/>
        <end position="101"/>
    </location>
</feature>
<feature type="strand" evidence="13">
    <location>
        <begin position="104"/>
        <end position="106"/>
    </location>
</feature>
<feature type="strand" evidence="13">
    <location>
        <begin position="108"/>
        <end position="116"/>
    </location>
</feature>
<feature type="strand" evidence="13">
    <location>
        <begin position="120"/>
        <end position="122"/>
    </location>
</feature>
<feature type="strand" evidence="13">
    <location>
        <begin position="131"/>
        <end position="135"/>
    </location>
</feature>
<feature type="strand" evidence="13">
    <location>
        <begin position="140"/>
        <end position="142"/>
    </location>
</feature>
<feature type="turn" evidence="13">
    <location>
        <begin position="143"/>
        <end position="146"/>
    </location>
</feature>
<feature type="helix" evidence="13">
    <location>
        <begin position="151"/>
        <end position="153"/>
    </location>
</feature>
<feature type="turn" evidence="13">
    <location>
        <begin position="154"/>
        <end position="156"/>
    </location>
</feature>
<feature type="strand" evidence="13">
    <location>
        <begin position="159"/>
        <end position="163"/>
    </location>
</feature>
<sequence>MARPGQRWLSKWLVAMVVLTLCRLATPLAKNLEPVSWSSLNPKFLSGKGLVIYPKIGDKLDIICPRAEAGRPYEYYKLYLVRPEQAAACSTVLDPNVLVTCNKPHQEIRFTIKFQEFSPNYMGLEFKKYHDYYITSTSNGSLEGLENREGGVCRTRTMKIVMKVGQDPNAVTPEQLTTSRPSKESDNTVKTATQAPGRGSQGDSDGKHETVNQEEKSGPGAGGGGSGDSDSFFNSKVALFAAVGAGCVIFLLIIIFLTVLLLKLRKRHRKHTQQRAAALSLSTLASPKGGSGTAGTEPSDIIIPLRTTENNYCPHYEKVSGDYGHPVYIVQEMPPQSPANIYYKV</sequence>
<gene>
    <name type="primary">Efnb1</name>
    <name type="synonym">Epl2</name>
    <name type="synonym">Eplg2</name>
    <name type="synonym">Lerk2</name>
    <name type="synonym">Stra1</name>
</gene>
<reference key="1">
    <citation type="journal article" date="1994" name="Genomics">
        <title>Genomic organization and chromosomal localization of mouse Eplg2, a gene encoding a binding protein for the receptor tyrosine kinase elk.</title>
        <authorList>
            <person name="Fletcher F.A."/>
            <person name="Renshaw B."/>
            <person name="Hollingsworth T."/>
            <person name="Baum P."/>
            <person name="Lyman S.D."/>
            <person name="Jenkins N.A."/>
            <person name="Gilbert D.J."/>
            <person name="Copeland N.G."/>
            <person name="Davison B.L."/>
        </authorList>
    </citation>
    <scope>NUCLEOTIDE SEQUENCE [GENOMIC DNA]</scope>
    <source>
        <strain>129/Sv</strain>
    </source>
</reference>
<reference key="2">
    <citation type="journal article" date="1995" name="Dev. Biol.">
        <title>Efficient cloning of cDNAs of retinoic acid-responsive genes in P19 embryonal carcinoma cells and characterization of a novel mouse gene, Stra1 (mouse LERK-2/Eplg2).</title>
        <authorList>
            <person name="Bouillet P."/>
            <person name="Oulad-Abdelghani M."/>
            <person name="Vicaire S."/>
            <person name="Garnier J.-M."/>
            <person name="Schuhbaur B."/>
            <person name="Dolle P."/>
            <person name="Chambon P."/>
        </authorList>
    </citation>
    <scope>NUCLEOTIDE SEQUENCE [MRNA]</scope>
</reference>
<reference key="3">
    <citation type="journal article" date="1994" name="J. Biol. Chem.">
        <title>cDNA cloning and characterization of a ligand for the Cek5 receptor protein-tyrosine kinase.</title>
        <authorList>
            <person name="Shao H."/>
            <person name="Lou L."/>
            <person name="Pandey A."/>
            <person name="Pasquale E.B."/>
            <person name="Dixit V.M."/>
        </authorList>
    </citation>
    <scope>NUCLEOTIDE SEQUENCE [MRNA]</scope>
    <scope>FUNCTION</scope>
    <scope>SUBCELLULAR LOCATION</scope>
    <source>
        <tissue>Brain</tissue>
    </source>
</reference>
<reference key="4">
    <citation type="journal article" date="2004" name="Genome Res.">
        <title>The status, quality, and expansion of the NIH full-length cDNA project: the Mammalian Gene Collection (MGC).</title>
        <authorList>
            <consortium name="The MGC Project Team"/>
        </authorList>
    </citation>
    <scope>NUCLEOTIDE SEQUENCE [LARGE SCALE MRNA]</scope>
    <source>
        <strain>FVB/N</strain>
        <tissue>Mammary gland</tissue>
    </source>
</reference>
<reference key="5">
    <citation type="journal article" date="1999" name="Neuron">
        <title>EphrinB ligands recruit GRIP family PDZ adaptor proteins into raft membrane microdomains.</title>
        <authorList>
            <person name="Brueckner K."/>
            <person name="Pablo Labrador J."/>
            <person name="Scheiffele P."/>
            <person name="Herb A."/>
            <person name="Seeburg P.H."/>
            <person name="Klein R."/>
        </authorList>
    </citation>
    <scope>SUBCELLULAR LOCATION</scope>
</reference>
<reference key="6">
    <citation type="journal article" date="2000" name="Development">
        <title>Complementary expression of transmembrane ephrins and their receptors in the mouse spinal cord: a possible role in constraining the orientation of longitudinally projecting axons.</title>
        <authorList>
            <person name="Imondi R."/>
            <person name="Wideman C."/>
            <person name="Kaprielian Z."/>
        </authorList>
    </citation>
    <scope>FUNCTION</scope>
    <scope>SUBCELLULAR LOCATION</scope>
    <scope>TISSUE SPECIFICITY</scope>
    <scope>DEVELOPMENTAL STAGE</scope>
</reference>
<reference key="7">
    <citation type="journal article" date="2007" name="Mol. Cell. Proteomics">
        <title>Qualitative and quantitative analyses of protein phosphorylation in naive and stimulated mouse synaptosomal preparations.</title>
        <authorList>
            <person name="Munton R.P."/>
            <person name="Tweedie-Cullen R."/>
            <person name="Livingstone-Zatchej M."/>
            <person name="Weinandy F."/>
            <person name="Waidelich M."/>
            <person name="Longo D."/>
            <person name="Gehrig P."/>
            <person name="Potthast F."/>
            <person name="Rutishauser D."/>
            <person name="Gerrits B."/>
            <person name="Panse C."/>
            <person name="Schlapbach R."/>
            <person name="Mansuy I.M."/>
        </authorList>
    </citation>
    <scope>IDENTIFICATION BY MASS SPECTROMETRY [LARGE SCALE ANALYSIS]</scope>
    <source>
        <tissue>Brain cortex</tissue>
    </source>
</reference>
<reference key="8">
    <citation type="journal article" date="2009" name="J. Neurosci.">
        <title>ZHX2 Interacts with Ephrin-B and regulates neural progenitor maintenance in the developing cerebral cortex.</title>
        <authorList>
            <person name="Wu C."/>
            <person name="Qiu R."/>
            <person name="Wang J."/>
            <person name="Zhang H."/>
            <person name="Murai K."/>
            <person name="Lu Q."/>
        </authorList>
    </citation>
    <scope>INTERACTION WITH ZHX2</scope>
    <scope>SUBCELLULAR LOCATION</scope>
</reference>
<reference key="9">
    <citation type="journal article" date="2010" name="Cell">
        <title>A tissue-specific atlas of mouse protein phosphorylation and expression.</title>
        <authorList>
            <person name="Huttlin E.L."/>
            <person name="Jedrychowski M.P."/>
            <person name="Elias J.E."/>
            <person name="Goswami T."/>
            <person name="Rad R."/>
            <person name="Beausoleil S.A."/>
            <person name="Villen J."/>
            <person name="Haas W."/>
            <person name="Sowa M.E."/>
            <person name="Gygi S.P."/>
        </authorList>
    </citation>
    <scope>IDENTIFICATION BY MASS SPECTROMETRY [LARGE SCALE ANALYSIS]</scope>
    <source>
        <tissue>Brown adipose tissue</tissue>
        <tissue>Kidney</tissue>
        <tissue>Lung</tissue>
        <tissue>Spleen</tissue>
        <tissue>Testis</tissue>
    </source>
</reference>
<reference key="10">
    <citation type="journal article" date="2011" name="BMB Rep.">
        <title>EphrinB1 interacts with the transcriptional co-repressor Groucho/xTLE4.</title>
        <authorList>
            <person name="Kamata T."/>
            <person name="Bong Y.S."/>
            <person name="Mood K."/>
            <person name="Park M.J."/>
            <person name="Nishanian T.G."/>
            <person name="Lee H.S."/>
        </authorList>
    </citation>
    <scope>INTERACTION WITH TLE1</scope>
</reference>
<reference key="11">
    <citation type="journal article" date="2016" name="Front. Cell Dev. Biol.">
        <title>Gene expression profiling of muscle stem cells identifies novel regulators of postnatal myogenesis.</title>
        <authorList>
            <person name="Alonso-Martin S."/>
            <person name="Rochat A."/>
            <person name="Mademtzoglou D."/>
            <person name="Morais J."/>
            <person name="de Reynies A."/>
            <person name="Aurade F."/>
            <person name="Chang T.H."/>
            <person name="Zammit P.S."/>
            <person name="Relaix F."/>
        </authorList>
    </citation>
    <scope>DEVELOPMENTAL STAGE</scope>
    <scope>TISSUE SPECIFICITY</scope>
</reference>
<accession>P52795</accession>